<organism>
    <name type="scientific">Xenopus laevis</name>
    <name type="common">African clawed frog</name>
    <dbReference type="NCBI Taxonomy" id="8355"/>
    <lineage>
        <taxon>Eukaryota</taxon>
        <taxon>Metazoa</taxon>
        <taxon>Chordata</taxon>
        <taxon>Craniata</taxon>
        <taxon>Vertebrata</taxon>
        <taxon>Euteleostomi</taxon>
        <taxon>Amphibia</taxon>
        <taxon>Batrachia</taxon>
        <taxon>Anura</taxon>
        <taxon>Pipoidea</taxon>
        <taxon>Pipidae</taxon>
        <taxon>Xenopodinae</taxon>
        <taxon>Xenopus</taxon>
        <taxon>Xenopus</taxon>
    </lineage>
</organism>
<accession>P0DP35</accession>
<accession>P02593</accession>
<accession>P0DP41</accession>
<accession>P62155</accession>
<accession>P70667</accession>
<accession>P99014</accession>
<accession>Q61379</accession>
<accession>Q61380</accession>
<accession>Q6INP3</accession>
<protein>
    <recommendedName>
        <fullName evidence="1">Calmodulin-2 B</fullName>
    </recommendedName>
</protein>
<feature type="initiator methionine" description="Removed" evidence="1">
    <location>
        <position position="1"/>
    </location>
</feature>
<feature type="chain" id="PRO_0000439946" description="Calmodulin-2 B">
    <location>
        <begin position="2"/>
        <end position="149"/>
    </location>
</feature>
<feature type="domain" description="EF-hand 1" evidence="2">
    <location>
        <begin position="8"/>
        <end position="43"/>
    </location>
</feature>
<feature type="domain" description="EF-hand 2" evidence="2">
    <location>
        <begin position="44"/>
        <end position="79"/>
    </location>
</feature>
<feature type="domain" description="EF-hand 3" evidence="2">
    <location>
        <begin position="81"/>
        <end position="116"/>
    </location>
</feature>
<feature type="domain" description="EF-hand 4" evidence="2">
    <location>
        <begin position="117"/>
        <end position="149"/>
    </location>
</feature>
<feature type="binding site" evidence="2">
    <location>
        <position position="21"/>
    </location>
    <ligand>
        <name>Ca(2+)</name>
        <dbReference type="ChEBI" id="CHEBI:29108"/>
        <label>1</label>
    </ligand>
</feature>
<feature type="binding site" evidence="2">
    <location>
        <position position="23"/>
    </location>
    <ligand>
        <name>Ca(2+)</name>
        <dbReference type="ChEBI" id="CHEBI:29108"/>
        <label>1</label>
    </ligand>
</feature>
<feature type="binding site" evidence="2">
    <location>
        <position position="25"/>
    </location>
    <ligand>
        <name>Ca(2+)</name>
        <dbReference type="ChEBI" id="CHEBI:29108"/>
        <label>1</label>
    </ligand>
</feature>
<feature type="binding site" evidence="2">
    <location>
        <position position="27"/>
    </location>
    <ligand>
        <name>Ca(2+)</name>
        <dbReference type="ChEBI" id="CHEBI:29108"/>
        <label>1</label>
    </ligand>
</feature>
<feature type="binding site" evidence="2">
    <location>
        <position position="32"/>
    </location>
    <ligand>
        <name>Ca(2+)</name>
        <dbReference type="ChEBI" id="CHEBI:29108"/>
        <label>1</label>
    </ligand>
</feature>
<feature type="binding site" evidence="2">
    <location>
        <position position="57"/>
    </location>
    <ligand>
        <name>Ca(2+)</name>
        <dbReference type="ChEBI" id="CHEBI:29108"/>
        <label>2</label>
    </ligand>
</feature>
<feature type="binding site" evidence="2">
    <location>
        <position position="59"/>
    </location>
    <ligand>
        <name>Ca(2+)</name>
        <dbReference type="ChEBI" id="CHEBI:29108"/>
        <label>2</label>
    </ligand>
</feature>
<feature type="binding site" evidence="2">
    <location>
        <position position="61"/>
    </location>
    <ligand>
        <name>Ca(2+)</name>
        <dbReference type="ChEBI" id="CHEBI:29108"/>
        <label>2</label>
    </ligand>
</feature>
<feature type="binding site" evidence="2">
    <location>
        <position position="63"/>
    </location>
    <ligand>
        <name>Ca(2+)</name>
        <dbReference type="ChEBI" id="CHEBI:29108"/>
        <label>2</label>
    </ligand>
</feature>
<feature type="binding site" evidence="2">
    <location>
        <position position="68"/>
    </location>
    <ligand>
        <name>Ca(2+)</name>
        <dbReference type="ChEBI" id="CHEBI:29108"/>
        <label>2</label>
    </ligand>
</feature>
<feature type="binding site" evidence="2">
    <location>
        <position position="94"/>
    </location>
    <ligand>
        <name>Ca(2+)</name>
        <dbReference type="ChEBI" id="CHEBI:29108"/>
        <label>3</label>
    </ligand>
</feature>
<feature type="binding site" evidence="2">
    <location>
        <position position="96"/>
    </location>
    <ligand>
        <name>Ca(2+)</name>
        <dbReference type="ChEBI" id="CHEBI:29108"/>
        <label>3</label>
    </ligand>
</feature>
<feature type="binding site" evidence="2">
    <location>
        <position position="98"/>
    </location>
    <ligand>
        <name>Ca(2+)</name>
        <dbReference type="ChEBI" id="CHEBI:29108"/>
        <label>3</label>
    </ligand>
</feature>
<feature type="binding site" evidence="2">
    <location>
        <position position="100"/>
    </location>
    <ligand>
        <name>Ca(2+)</name>
        <dbReference type="ChEBI" id="CHEBI:29108"/>
        <label>3</label>
    </ligand>
</feature>
<feature type="binding site" evidence="2">
    <location>
        <position position="105"/>
    </location>
    <ligand>
        <name>Ca(2+)</name>
        <dbReference type="ChEBI" id="CHEBI:29108"/>
        <label>3</label>
    </ligand>
</feature>
<feature type="binding site" evidence="2">
    <location>
        <position position="130"/>
    </location>
    <ligand>
        <name>Ca(2+)</name>
        <dbReference type="ChEBI" id="CHEBI:29108"/>
        <label>4</label>
    </ligand>
</feature>
<feature type="binding site" evidence="2">
    <location>
        <position position="132"/>
    </location>
    <ligand>
        <name>Ca(2+)</name>
        <dbReference type="ChEBI" id="CHEBI:29108"/>
        <label>4</label>
    </ligand>
</feature>
<feature type="binding site" evidence="2">
    <location>
        <position position="134"/>
    </location>
    <ligand>
        <name>Ca(2+)</name>
        <dbReference type="ChEBI" id="CHEBI:29108"/>
        <label>4</label>
    </ligand>
</feature>
<feature type="binding site" evidence="2">
    <location>
        <position position="136"/>
    </location>
    <ligand>
        <name>Ca(2+)</name>
        <dbReference type="ChEBI" id="CHEBI:29108"/>
        <label>4</label>
    </ligand>
</feature>
<feature type="binding site" evidence="2">
    <location>
        <position position="141"/>
    </location>
    <ligand>
        <name>Ca(2+)</name>
        <dbReference type="ChEBI" id="CHEBI:29108"/>
        <label>4</label>
    </ligand>
</feature>
<feature type="modified residue" description="N-acetylalanine" evidence="1">
    <location>
        <position position="2"/>
    </location>
</feature>
<feature type="modified residue" description="N6,N6,N6-trimethyllysine" evidence="1">
    <location>
        <position position="116"/>
    </location>
</feature>
<sequence length="149" mass="16838">MADQLTEEQIAEFKEAFSLFDKDGDGTITTKELGTVMRSLGQNPTEAELQDMINEVDADGNGTIDFPEFLTMMARKMKDTDSEEEIREAFRVFDKDGNGYISAAELRHVMTNLGEKLTDEEVDEMIREADIDGDGQVNYEEFVQMMTAK</sequence>
<evidence type="ECO:0000250" key="1">
    <source>
        <dbReference type="UniProtKB" id="P0DP23"/>
    </source>
</evidence>
<evidence type="ECO:0000255" key="2">
    <source>
        <dbReference type="PROSITE-ProRule" id="PRU00448"/>
    </source>
</evidence>
<evidence type="ECO:0000305" key="3"/>
<keyword id="KW-0002">3D-structure</keyword>
<keyword id="KW-0007">Acetylation</keyword>
<keyword id="KW-0106">Calcium</keyword>
<keyword id="KW-0479">Metal-binding</keyword>
<keyword id="KW-0488">Methylation</keyword>
<keyword id="KW-1185">Reference proteome</keyword>
<keyword id="KW-0677">Repeat</keyword>
<comment type="function">
    <text evidence="1">Calmodulin acts as part of a calcium signal transduction pathway by mediating the control of a large number of enzymes, ion channels, aquaporins and other proteins through calcium-binding. Calcium-binding is required for the activation of calmodulin. Among the enzymes to be stimulated by the calmodulin-calcium complex are a number of protein kinases, such as myosin light-chain kinases and calmodulin-dependent protein kinase type II (CaMK2), and phosphatases.</text>
</comment>
<comment type="miscellaneous">
    <text>This protein has four functional calcium-binding sites.</text>
</comment>
<comment type="similarity">
    <text evidence="3">Belongs to the calmodulin family.</text>
</comment>
<proteinExistence type="evidence at protein level"/>
<name>CAM2B_XENLA</name>
<reference key="1">
    <citation type="journal article" date="1984" name="Mol. Cell. Biol.">
        <title>Isolation and characterization of calmodulin genes from Xenopus laevis.</title>
        <authorList>
            <person name="Chien Y.-H."/>
            <person name="Dawid I.B."/>
        </authorList>
    </citation>
    <scope>NUCLEOTIDE SEQUENCE [MRNA]</scope>
</reference>
<reference key="2">
    <citation type="submission" date="2005-04" db="EMBL/GenBank/DDBJ databases">
        <authorList>
            <consortium name="NIH - Xenopus Gene Collection (XGC) project"/>
        </authorList>
    </citation>
    <scope>NUCLEOTIDE SEQUENCE [LARGE SCALE MRNA] (CALM1 AND CALM2)</scope>
    <source>
        <tissue>Embryo</tissue>
        <tissue>Kidney</tissue>
    </source>
</reference>
<gene>
    <name evidence="1" type="primary">calm2-b</name>
</gene>
<dbReference type="EMBL" id="K01945">
    <property type="protein sequence ID" value="AAA49669.1"/>
    <property type="molecule type" value="mRNA"/>
</dbReference>
<dbReference type="EMBL" id="BC072232">
    <property type="protein sequence ID" value="AAH72232.1"/>
    <property type="molecule type" value="mRNA"/>
</dbReference>
<dbReference type="RefSeq" id="NP_001080864.1">
    <property type="nucleotide sequence ID" value="NM_001087395.1"/>
</dbReference>
<dbReference type="RefSeq" id="NP_001084025.1">
    <property type="nucleotide sequence ID" value="NM_001090556.1"/>
</dbReference>
<dbReference type="RefSeq" id="NP_001089059.1">
    <property type="nucleotide sequence ID" value="NM_001095590.1"/>
</dbReference>
<dbReference type="PDB" id="1UP5">
    <property type="method" value="X-ray"/>
    <property type="resolution" value="1.90 A"/>
    <property type="chains" value="A/B=2-149"/>
</dbReference>
<dbReference type="PDBsum" id="1UP5"/>
<dbReference type="SMR" id="P0DP35"/>
<dbReference type="DNASU" id="108698710"/>
<dbReference type="DNASU" id="380558"/>
<dbReference type="DNASU" id="399259"/>
<dbReference type="DNASU" id="606721"/>
<dbReference type="GeneID" id="380558"/>
<dbReference type="GeneID" id="399259"/>
<dbReference type="GeneID" id="606721"/>
<dbReference type="KEGG" id="xla:108698710"/>
<dbReference type="KEGG" id="xla:380558"/>
<dbReference type="KEGG" id="xla:399259"/>
<dbReference type="KEGG" id="xla:606721"/>
<dbReference type="CTD" id="108698710"/>
<dbReference type="CTD" id="380558"/>
<dbReference type="CTD" id="399259"/>
<dbReference type="CTD" id="606721"/>
<dbReference type="OrthoDB" id="9924840at2759"/>
<dbReference type="Proteomes" id="UP000186698">
    <property type="component" value="Chromosome 5L"/>
</dbReference>
<dbReference type="Proteomes" id="UP000186698">
    <property type="component" value="Chromosome 5S"/>
</dbReference>
<dbReference type="Proteomes" id="UP000186698">
    <property type="component" value="Chromosome 8L"/>
</dbReference>
<dbReference type="Proteomes" id="UP000186698">
    <property type="component" value="Chromosome 8S"/>
</dbReference>
<dbReference type="Bgee" id="108698710">
    <property type="expression patterns" value="Expressed in brain and 19 other cell types or tissues"/>
</dbReference>
<dbReference type="GO" id="GO:0016460">
    <property type="term" value="C:myosin II complex"/>
    <property type="evidence" value="ECO:0000318"/>
    <property type="project" value="GO_Central"/>
</dbReference>
<dbReference type="GO" id="GO:0005509">
    <property type="term" value="F:calcium ion binding"/>
    <property type="evidence" value="ECO:0007669"/>
    <property type="project" value="InterPro"/>
</dbReference>
<dbReference type="GO" id="GO:0005102">
    <property type="term" value="F:signaling receptor binding"/>
    <property type="evidence" value="ECO:0000353"/>
    <property type="project" value="BHF-UCL"/>
</dbReference>
<dbReference type="CDD" id="cd00051">
    <property type="entry name" value="EFh"/>
    <property type="match status" value="2"/>
</dbReference>
<dbReference type="FunFam" id="1.10.238.10:FF:000527">
    <property type="entry name" value="Calmodulin-3"/>
    <property type="match status" value="1"/>
</dbReference>
<dbReference type="Gene3D" id="1.10.238.10">
    <property type="entry name" value="EF-hand"/>
    <property type="match status" value="3"/>
</dbReference>
<dbReference type="InterPro" id="IPR050230">
    <property type="entry name" value="CALM/Myosin/TropC-like"/>
</dbReference>
<dbReference type="InterPro" id="IPR011992">
    <property type="entry name" value="EF-hand-dom_pair"/>
</dbReference>
<dbReference type="InterPro" id="IPR018247">
    <property type="entry name" value="EF_Hand_1_Ca_BS"/>
</dbReference>
<dbReference type="InterPro" id="IPR002048">
    <property type="entry name" value="EF_hand_dom"/>
</dbReference>
<dbReference type="PANTHER" id="PTHR23048:SF0">
    <property type="entry name" value="CALMODULIN LIKE 3"/>
    <property type="match status" value="1"/>
</dbReference>
<dbReference type="PANTHER" id="PTHR23048">
    <property type="entry name" value="MYOSIN LIGHT CHAIN 1, 3"/>
    <property type="match status" value="1"/>
</dbReference>
<dbReference type="Pfam" id="PF13499">
    <property type="entry name" value="EF-hand_7"/>
    <property type="match status" value="2"/>
</dbReference>
<dbReference type="PRINTS" id="PR00450">
    <property type="entry name" value="RECOVERIN"/>
</dbReference>
<dbReference type="SMART" id="SM00054">
    <property type="entry name" value="EFh"/>
    <property type="match status" value="4"/>
</dbReference>
<dbReference type="SUPFAM" id="SSF47473">
    <property type="entry name" value="EF-hand"/>
    <property type="match status" value="1"/>
</dbReference>
<dbReference type="PROSITE" id="PS00018">
    <property type="entry name" value="EF_HAND_1"/>
    <property type="match status" value="4"/>
</dbReference>
<dbReference type="PROSITE" id="PS50222">
    <property type="entry name" value="EF_HAND_2"/>
    <property type="match status" value="4"/>
</dbReference>